<proteinExistence type="evidence at protein level"/>
<feature type="chain" id="PRO_0000433345" description="L-methionine sulfoximine/L-methionine sulfone acetyltransferase">
    <location>
        <begin position="1"/>
        <end position="172"/>
    </location>
</feature>
<feature type="domain" description="N-acetyltransferase" evidence="3">
    <location>
        <begin position="3"/>
        <end position="166"/>
    </location>
</feature>
<feature type="binding site" evidence="1">
    <location>
        <begin position="75"/>
        <end position="77"/>
    </location>
    <ligand>
        <name>substrate</name>
    </ligand>
</feature>
<feature type="binding site" evidence="1">
    <location>
        <begin position="85"/>
        <end position="87"/>
    </location>
    <ligand>
        <name>substrate</name>
    </ligand>
</feature>
<feature type="binding site" evidence="2">
    <location>
        <begin position="88"/>
        <end position="90"/>
    </location>
    <ligand>
        <name>acetyl-CoA</name>
        <dbReference type="ChEBI" id="CHEBI:57288"/>
    </ligand>
</feature>
<feature type="binding site" evidence="2">
    <location>
        <begin position="96"/>
        <end position="101"/>
    </location>
    <ligand>
        <name>acetyl-CoA</name>
        <dbReference type="ChEBI" id="CHEBI:57288"/>
    </ligand>
</feature>
<feature type="binding site" evidence="2">
    <location>
        <position position="127"/>
    </location>
    <ligand>
        <name>acetyl-CoA</name>
        <dbReference type="ChEBI" id="CHEBI:57288"/>
    </ligand>
</feature>
<feature type="strand" evidence="7">
    <location>
        <begin position="5"/>
        <end position="7"/>
    </location>
</feature>
<feature type="helix" evidence="7">
    <location>
        <begin position="10"/>
        <end position="12"/>
    </location>
</feature>
<feature type="helix" evidence="7">
    <location>
        <begin position="13"/>
        <end position="26"/>
    </location>
</feature>
<feature type="strand" evidence="7">
    <location>
        <begin position="28"/>
        <end position="31"/>
    </location>
</feature>
<feature type="helix" evidence="7">
    <location>
        <begin position="38"/>
        <end position="51"/>
    </location>
</feature>
<feature type="strand" evidence="7">
    <location>
        <begin position="55"/>
        <end position="59"/>
    </location>
</feature>
<feature type="strand" evidence="7">
    <location>
        <begin position="65"/>
        <end position="77"/>
    </location>
</feature>
<feature type="helix" evidence="7">
    <location>
        <begin position="78"/>
        <end position="80"/>
    </location>
</feature>
<feature type="strand" evidence="7">
    <location>
        <begin position="83"/>
        <end position="90"/>
    </location>
</feature>
<feature type="helix" evidence="7">
    <location>
        <begin position="92"/>
        <end position="94"/>
    </location>
</feature>
<feature type="helix" evidence="7">
    <location>
        <begin position="99"/>
        <end position="113"/>
    </location>
</feature>
<feature type="strand" evidence="7">
    <location>
        <begin position="118"/>
        <end position="124"/>
    </location>
</feature>
<feature type="helix" evidence="7">
    <location>
        <begin position="128"/>
        <end position="136"/>
    </location>
</feature>
<feature type="strand" evidence="7">
    <location>
        <begin position="140"/>
        <end position="151"/>
    </location>
</feature>
<feature type="strand" evidence="7">
    <location>
        <begin position="154"/>
        <end position="165"/>
    </location>
</feature>
<organism>
    <name type="scientific">Pseudomonas aeruginosa (strain ATCC 15692 / DSM 22644 / CIP 104116 / JCM 14847 / LMG 12228 / 1C / PRS 101 / PAO1)</name>
    <dbReference type="NCBI Taxonomy" id="208964"/>
    <lineage>
        <taxon>Bacteria</taxon>
        <taxon>Pseudomonadati</taxon>
        <taxon>Pseudomonadota</taxon>
        <taxon>Gammaproteobacteria</taxon>
        <taxon>Pseudomonadales</taxon>
        <taxon>Pseudomonadaceae</taxon>
        <taxon>Pseudomonas</taxon>
    </lineage>
</organism>
<reference key="1">
    <citation type="journal article" date="2000" name="Nature">
        <title>Complete genome sequence of Pseudomonas aeruginosa PAO1, an opportunistic pathogen.</title>
        <authorList>
            <person name="Stover C.K."/>
            <person name="Pham X.-Q.T."/>
            <person name="Erwin A.L."/>
            <person name="Mizoguchi S.D."/>
            <person name="Warrener P."/>
            <person name="Hickey M.J."/>
            <person name="Brinkman F.S.L."/>
            <person name="Hufnagle W.O."/>
            <person name="Kowalik D.J."/>
            <person name="Lagrou M."/>
            <person name="Garber R.L."/>
            <person name="Goltry L."/>
            <person name="Tolentino E."/>
            <person name="Westbrock-Wadman S."/>
            <person name="Yuan Y."/>
            <person name="Brody L.L."/>
            <person name="Coulter S.N."/>
            <person name="Folger K.R."/>
            <person name="Kas A."/>
            <person name="Larbig K."/>
            <person name="Lim R.M."/>
            <person name="Smith K.A."/>
            <person name="Spencer D.H."/>
            <person name="Wong G.K.-S."/>
            <person name="Wu Z."/>
            <person name="Paulsen I.T."/>
            <person name="Reizer J."/>
            <person name="Saier M.H. Jr."/>
            <person name="Hancock R.E.W."/>
            <person name="Lory S."/>
            <person name="Olson M.V."/>
        </authorList>
    </citation>
    <scope>NUCLEOTIDE SEQUENCE [LARGE SCALE GENOMIC DNA]</scope>
    <source>
        <strain>ATCC 15692 / DSM 22644 / CIP 104116 / JCM 14847 / LMG 12228 / 1C / PRS 101 / PAO1</strain>
    </source>
</reference>
<reference key="2">
    <citation type="journal article" date="2005" name="Proteins">
        <title>Crystal structure of a putative phosphinothricin acetyltransferase (PA4866) from Pseudomonas aeruginosa PAC1.</title>
        <authorList>
            <person name="Davies A.M."/>
            <person name="Tata R."/>
            <person name="Agha R."/>
            <person name="Sutton B.J."/>
            <person name="Brown P.R."/>
        </authorList>
    </citation>
    <scope>X-RAY CRYSTALLOGRAPHY (2.00 ANGSTROMS)</scope>
    <scope>SUBUNIT</scope>
    <source>
        <strain>ATCC 15692 / DSM 22644 / CIP 104116 / JCM 14847 / LMG 12228 / 1C / PRS 101 / PAO1</strain>
    </source>
</reference>
<reference key="3">
    <citation type="submission" date="2005-02" db="PDB data bank">
        <title>Crystal structure of a hypothetical acetyltransferase from P.aeruginosa PA01.</title>
        <authorList>
            <consortium name="Midwest center for structural genomics (MCSG)"/>
        </authorList>
    </citation>
    <scope>X-RAY CRYSTALLOGRAPHY (1.90 ANGSTROMS)</scope>
    <scope>SUBUNIT</scope>
    <source>
        <strain>ATCC 15692 / DSM 22644 / CIP 104116 / JCM 14847 / LMG 12228 / 1C / PRS 101 / PAO1</strain>
    </source>
</reference>
<name>MDDA_PSEAE</name>
<keyword id="KW-0002">3D-structure</keyword>
<keyword id="KW-0012">Acyltransferase</keyword>
<keyword id="KW-1185">Reference proteome</keyword>
<keyword id="KW-0808">Transferase</keyword>
<comment type="function">
    <text evidence="1">Plays a role in the resistance against the toxic effects of L-methionine sulfoximine (MSX), a rare amino acid, which inhibits glutamine synthetase (GlnA). Catalyzes the acetylation of L-methionine sulfoximine (MSX).</text>
</comment>
<comment type="catalytic activity">
    <reaction evidence="1">
        <text>L-methionine sulfoximine + acetyl-CoA = N-acetyl-L-methionine sulfoximine + CoA + H(+)</text>
        <dbReference type="Rhea" id="RHEA:47660"/>
        <dbReference type="ChEBI" id="CHEBI:15378"/>
        <dbReference type="ChEBI" id="CHEBI:57287"/>
        <dbReference type="ChEBI" id="CHEBI:57288"/>
        <dbReference type="ChEBI" id="CHEBI:87826"/>
        <dbReference type="ChEBI" id="CHEBI:87827"/>
    </reaction>
</comment>
<comment type="catalytic activity">
    <reaction evidence="1">
        <text>L-methionine sulfone + acetyl-CoA = N-acetyl-L-methionine sulfone + CoA + H(+)</text>
        <dbReference type="Rhea" id="RHEA:47656"/>
        <dbReference type="ChEBI" id="CHEBI:15378"/>
        <dbReference type="ChEBI" id="CHEBI:57287"/>
        <dbReference type="ChEBI" id="CHEBI:57288"/>
        <dbReference type="ChEBI" id="CHEBI:87824"/>
        <dbReference type="ChEBI" id="CHEBI:87825"/>
    </reaction>
</comment>
<comment type="subunit">
    <text evidence="4 5">Homodimer.</text>
</comment>
<sequence>MSASIRDAGVADLPGILAIYNDAVGNTTAIWNETPVDLANRQAWFDTRARQGYPILVASDAAGEVLGYASYGDWRPFEGFRGTVEHSVYVRDDQRGKGLGVQLLQALIERARAQGLHVMVAAIESGNAASIGLHRRLGFEISGQMPQVGQKFGRWLDLTFMQLNLDPTRSAP</sequence>
<gene>
    <name evidence="6" type="primary">pitA</name>
    <name type="ordered locus">PA4866</name>
</gene>
<dbReference type="EC" id="2.3.1.-" evidence="1"/>
<dbReference type="EMBL" id="AE004091">
    <property type="protein sequence ID" value="AAG08251.1"/>
    <property type="molecule type" value="Genomic_DNA"/>
</dbReference>
<dbReference type="PIR" id="F83037">
    <property type="entry name" value="F83037"/>
</dbReference>
<dbReference type="RefSeq" id="NP_253553.1">
    <property type="nucleotide sequence ID" value="NC_002516.2"/>
</dbReference>
<dbReference type="RefSeq" id="WP_003099390.1">
    <property type="nucleotide sequence ID" value="NZ_QZGE01000002.1"/>
</dbReference>
<dbReference type="PDB" id="1YVO">
    <property type="method" value="X-ray"/>
    <property type="resolution" value="1.90 A"/>
    <property type="chains" value="A/B=1-172"/>
</dbReference>
<dbReference type="PDB" id="2BL1">
    <property type="method" value="X-ray"/>
    <property type="resolution" value="2.00 A"/>
    <property type="chains" value="A=1-172"/>
</dbReference>
<dbReference type="PDBsum" id="1YVO"/>
<dbReference type="PDBsum" id="2BL1"/>
<dbReference type="SMR" id="Q9HUU7"/>
<dbReference type="FunCoup" id="Q9HUU7">
    <property type="interactions" value="37"/>
</dbReference>
<dbReference type="STRING" id="208964.PA4866"/>
<dbReference type="PaxDb" id="208964-PA4866"/>
<dbReference type="DNASU" id="882184"/>
<dbReference type="GeneID" id="882184"/>
<dbReference type="KEGG" id="pae:PA4866"/>
<dbReference type="PATRIC" id="fig|208964.12.peg.5099"/>
<dbReference type="PseudoCAP" id="PA4866"/>
<dbReference type="HOGENOM" id="CLU_013985_4_4_6"/>
<dbReference type="InParanoid" id="Q9HUU7"/>
<dbReference type="OrthoDB" id="5459937at2"/>
<dbReference type="PhylomeDB" id="Q9HUU7"/>
<dbReference type="BioCyc" id="PAER208964:G1FZ6-4980-MONOMER"/>
<dbReference type="BRENDA" id="2.3.1.183">
    <property type="organism ID" value="5087"/>
</dbReference>
<dbReference type="EvolutionaryTrace" id="Q9HUU7"/>
<dbReference type="Proteomes" id="UP000002438">
    <property type="component" value="Chromosome"/>
</dbReference>
<dbReference type="GO" id="GO:0016747">
    <property type="term" value="F:acyltransferase activity, transferring groups other than amino-acyl groups"/>
    <property type="evidence" value="ECO:0000250"/>
    <property type="project" value="UniProtKB"/>
</dbReference>
<dbReference type="CDD" id="cd04301">
    <property type="entry name" value="NAT_SF"/>
    <property type="match status" value="1"/>
</dbReference>
<dbReference type="FunFam" id="3.40.630.30:FF:000026">
    <property type="entry name" value="Phosphinothricin acetyltransferase"/>
    <property type="match status" value="1"/>
</dbReference>
<dbReference type="Gene3D" id="3.40.630.30">
    <property type="match status" value="1"/>
</dbReference>
<dbReference type="InterPro" id="IPR016181">
    <property type="entry name" value="Acyl_CoA_acyltransferase"/>
</dbReference>
<dbReference type="InterPro" id="IPR000182">
    <property type="entry name" value="GNAT_dom"/>
</dbReference>
<dbReference type="PANTHER" id="PTHR43072">
    <property type="entry name" value="N-ACETYLTRANSFERASE"/>
    <property type="match status" value="1"/>
</dbReference>
<dbReference type="PANTHER" id="PTHR43072:SF23">
    <property type="entry name" value="UPF0039 PROTEIN C11D3.02C"/>
    <property type="match status" value="1"/>
</dbReference>
<dbReference type="Pfam" id="PF00583">
    <property type="entry name" value="Acetyltransf_1"/>
    <property type="match status" value="1"/>
</dbReference>
<dbReference type="SUPFAM" id="SSF55729">
    <property type="entry name" value="Acyl-CoA N-acyltransferases (Nat)"/>
    <property type="match status" value="1"/>
</dbReference>
<dbReference type="PROSITE" id="PS51186">
    <property type="entry name" value="GNAT"/>
    <property type="match status" value="1"/>
</dbReference>
<evidence type="ECO:0000250" key="1">
    <source>
        <dbReference type="UniProtKB" id="A6VCX3"/>
    </source>
</evidence>
<evidence type="ECO:0000250" key="2">
    <source>
        <dbReference type="UniProtKB" id="Q8ZPD3"/>
    </source>
</evidence>
<evidence type="ECO:0000255" key="3">
    <source>
        <dbReference type="PROSITE-ProRule" id="PRU00532"/>
    </source>
</evidence>
<evidence type="ECO:0000269" key="4">
    <source>
    </source>
</evidence>
<evidence type="ECO:0000269" key="5">
    <source ref="3"/>
</evidence>
<evidence type="ECO:0000303" key="6">
    <source>
    </source>
</evidence>
<evidence type="ECO:0007829" key="7">
    <source>
        <dbReference type="PDB" id="1YVO"/>
    </source>
</evidence>
<accession>Q9HUU7</accession>
<protein>
    <recommendedName>
        <fullName evidence="1">L-methionine sulfoximine/L-methionine sulfone acetyltransferase</fullName>
        <ecNumber evidence="1">2.3.1.-</ecNumber>
    </recommendedName>
    <alternativeName>
        <fullName evidence="2">Methionine derivative detoxifier A</fullName>
        <shortName evidence="2">MDDA</shortName>
    </alternativeName>
</protein>